<sequence>MKRIALGVQYDGSVFCGWQSQPHGNTVQDELERALREFAQTPVQTIVAGRTDTGVHGLGQVVHFDTELDRADVSWVRGTNSFLPKTISVQWAKPMPDEFHARFSAFERTYYYVLYVHPVRSPMLAARAGWVHAALDVDAMQAAAAHLIGEHDFSAFRSSQCQSKTPVKHLYQIDVRQQGDFIHFRFRANAFLHHMVRNLMGCLVYIGRGRRPVEWMAEVLASRDREFAAPTFMPDGLYLAQVGYPEQFAVPAPQTGSVPWSTVWTEQAQT</sequence>
<proteinExistence type="inferred from homology"/>
<accession>Q13S27</accession>
<name>TRUA_PARXL</name>
<feature type="chain" id="PRO_1000017061" description="tRNA pseudouridine synthase A">
    <location>
        <begin position="1"/>
        <end position="270"/>
    </location>
</feature>
<feature type="active site" description="Nucleophile" evidence="1">
    <location>
        <position position="52"/>
    </location>
</feature>
<feature type="binding site" evidence="1">
    <location>
        <position position="110"/>
    </location>
    <ligand>
        <name>substrate</name>
    </ligand>
</feature>
<keyword id="KW-0413">Isomerase</keyword>
<keyword id="KW-1185">Reference proteome</keyword>
<keyword id="KW-0819">tRNA processing</keyword>
<dbReference type="EC" id="5.4.99.12" evidence="1"/>
<dbReference type="EMBL" id="CP000271">
    <property type="protein sequence ID" value="ABE33112.1"/>
    <property type="molecule type" value="Genomic_DNA"/>
</dbReference>
<dbReference type="RefSeq" id="WP_011490495.1">
    <property type="nucleotide sequence ID" value="NC_007952.1"/>
</dbReference>
<dbReference type="SMR" id="Q13S27"/>
<dbReference type="STRING" id="266265.Bxe_B2883"/>
<dbReference type="KEGG" id="bxb:DR64_5213"/>
<dbReference type="KEGG" id="bxe:Bxe_B2883"/>
<dbReference type="PATRIC" id="fig|266265.5.peg.4806"/>
<dbReference type="eggNOG" id="COG0101">
    <property type="taxonomic scope" value="Bacteria"/>
</dbReference>
<dbReference type="OrthoDB" id="9811823at2"/>
<dbReference type="Proteomes" id="UP000001817">
    <property type="component" value="Chromosome 2"/>
</dbReference>
<dbReference type="GO" id="GO:0003723">
    <property type="term" value="F:RNA binding"/>
    <property type="evidence" value="ECO:0007669"/>
    <property type="project" value="InterPro"/>
</dbReference>
<dbReference type="GO" id="GO:0160147">
    <property type="term" value="F:tRNA pseudouridine(38-40) synthase activity"/>
    <property type="evidence" value="ECO:0007669"/>
    <property type="project" value="UniProtKB-EC"/>
</dbReference>
<dbReference type="GO" id="GO:0031119">
    <property type="term" value="P:tRNA pseudouridine synthesis"/>
    <property type="evidence" value="ECO:0007669"/>
    <property type="project" value="UniProtKB-UniRule"/>
</dbReference>
<dbReference type="CDD" id="cd02570">
    <property type="entry name" value="PseudoU_synth_EcTruA"/>
    <property type="match status" value="1"/>
</dbReference>
<dbReference type="FunFam" id="3.30.70.580:FF:000001">
    <property type="entry name" value="tRNA pseudouridine synthase A"/>
    <property type="match status" value="1"/>
</dbReference>
<dbReference type="Gene3D" id="3.30.70.660">
    <property type="entry name" value="Pseudouridine synthase I, catalytic domain, C-terminal subdomain"/>
    <property type="match status" value="1"/>
</dbReference>
<dbReference type="Gene3D" id="3.30.70.580">
    <property type="entry name" value="Pseudouridine synthase I, catalytic domain, N-terminal subdomain"/>
    <property type="match status" value="1"/>
</dbReference>
<dbReference type="HAMAP" id="MF_00171">
    <property type="entry name" value="TruA"/>
    <property type="match status" value="1"/>
</dbReference>
<dbReference type="InterPro" id="IPR020103">
    <property type="entry name" value="PsdUridine_synth_cat_dom_sf"/>
</dbReference>
<dbReference type="InterPro" id="IPR001406">
    <property type="entry name" value="PsdUridine_synth_TruA"/>
</dbReference>
<dbReference type="InterPro" id="IPR020097">
    <property type="entry name" value="PsdUridine_synth_TruA_a/b_dom"/>
</dbReference>
<dbReference type="InterPro" id="IPR020095">
    <property type="entry name" value="PsdUridine_synth_TruA_C"/>
</dbReference>
<dbReference type="InterPro" id="IPR020094">
    <property type="entry name" value="TruA/RsuA/RluB/E/F_N"/>
</dbReference>
<dbReference type="NCBIfam" id="TIGR00071">
    <property type="entry name" value="hisT_truA"/>
    <property type="match status" value="1"/>
</dbReference>
<dbReference type="PANTHER" id="PTHR11142">
    <property type="entry name" value="PSEUDOURIDYLATE SYNTHASE"/>
    <property type="match status" value="1"/>
</dbReference>
<dbReference type="PANTHER" id="PTHR11142:SF0">
    <property type="entry name" value="TRNA PSEUDOURIDINE SYNTHASE-LIKE 1"/>
    <property type="match status" value="1"/>
</dbReference>
<dbReference type="Pfam" id="PF01416">
    <property type="entry name" value="PseudoU_synth_1"/>
    <property type="match status" value="2"/>
</dbReference>
<dbReference type="PIRSF" id="PIRSF001430">
    <property type="entry name" value="tRNA_psdUrid_synth"/>
    <property type="match status" value="1"/>
</dbReference>
<dbReference type="SUPFAM" id="SSF55120">
    <property type="entry name" value="Pseudouridine synthase"/>
    <property type="match status" value="1"/>
</dbReference>
<protein>
    <recommendedName>
        <fullName evidence="1">tRNA pseudouridine synthase A</fullName>
        <ecNumber evidence="1">5.4.99.12</ecNumber>
    </recommendedName>
    <alternativeName>
        <fullName evidence="1">tRNA pseudouridine(38-40) synthase</fullName>
    </alternativeName>
    <alternativeName>
        <fullName evidence="1">tRNA pseudouridylate synthase I</fullName>
    </alternativeName>
    <alternativeName>
        <fullName evidence="1">tRNA-uridine isomerase I</fullName>
    </alternativeName>
</protein>
<comment type="function">
    <text evidence="1">Formation of pseudouridine at positions 38, 39 and 40 in the anticodon stem and loop of transfer RNAs.</text>
</comment>
<comment type="catalytic activity">
    <reaction evidence="1">
        <text>uridine(38/39/40) in tRNA = pseudouridine(38/39/40) in tRNA</text>
        <dbReference type="Rhea" id="RHEA:22376"/>
        <dbReference type="Rhea" id="RHEA-COMP:10085"/>
        <dbReference type="Rhea" id="RHEA-COMP:10087"/>
        <dbReference type="ChEBI" id="CHEBI:65314"/>
        <dbReference type="ChEBI" id="CHEBI:65315"/>
        <dbReference type="EC" id="5.4.99.12"/>
    </reaction>
</comment>
<comment type="subunit">
    <text evidence="1">Homodimer.</text>
</comment>
<comment type="similarity">
    <text evidence="1">Belongs to the tRNA pseudouridine synthase TruA family.</text>
</comment>
<evidence type="ECO:0000255" key="1">
    <source>
        <dbReference type="HAMAP-Rule" id="MF_00171"/>
    </source>
</evidence>
<organism>
    <name type="scientific">Paraburkholderia xenovorans (strain LB400)</name>
    <dbReference type="NCBI Taxonomy" id="266265"/>
    <lineage>
        <taxon>Bacteria</taxon>
        <taxon>Pseudomonadati</taxon>
        <taxon>Pseudomonadota</taxon>
        <taxon>Betaproteobacteria</taxon>
        <taxon>Burkholderiales</taxon>
        <taxon>Burkholderiaceae</taxon>
        <taxon>Paraburkholderia</taxon>
    </lineage>
</organism>
<gene>
    <name evidence="1" type="primary">truA</name>
    <name type="ordered locus">Bxeno_B0144</name>
    <name type="ORF">Bxe_B2883</name>
</gene>
<reference key="1">
    <citation type="journal article" date="2006" name="Proc. Natl. Acad. Sci. U.S.A.">
        <title>Burkholderia xenovorans LB400 harbors a multi-replicon, 9.73-Mbp genome shaped for versatility.</title>
        <authorList>
            <person name="Chain P.S.G."/>
            <person name="Denef V.J."/>
            <person name="Konstantinidis K.T."/>
            <person name="Vergez L.M."/>
            <person name="Agullo L."/>
            <person name="Reyes V.L."/>
            <person name="Hauser L."/>
            <person name="Cordova M."/>
            <person name="Gomez L."/>
            <person name="Gonzalez M."/>
            <person name="Land M."/>
            <person name="Lao V."/>
            <person name="Larimer F."/>
            <person name="LiPuma J.J."/>
            <person name="Mahenthiralingam E."/>
            <person name="Malfatti S.A."/>
            <person name="Marx C.J."/>
            <person name="Parnell J.J."/>
            <person name="Ramette A."/>
            <person name="Richardson P."/>
            <person name="Seeger M."/>
            <person name="Smith D."/>
            <person name="Spilker T."/>
            <person name="Sul W.J."/>
            <person name="Tsoi T.V."/>
            <person name="Ulrich L.E."/>
            <person name="Zhulin I.B."/>
            <person name="Tiedje J.M."/>
        </authorList>
    </citation>
    <scope>NUCLEOTIDE SEQUENCE [LARGE SCALE GENOMIC DNA]</scope>
    <source>
        <strain>LB400</strain>
    </source>
</reference>